<accession>O13562</accession>
<feature type="chain" id="PRO_0000299619" description="Putative uncharacterized protein YLR171W">
    <location>
        <begin position="1"/>
        <end position="129"/>
    </location>
</feature>
<feature type="transmembrane region" description="Helical" evidence="1">
    <location>
        <begin position="49"/>
        <end position="69"/>
    </location>
</feature>
<feature type="transmembrane region" description="Helical" evidence="1">
    <location>
        <begin position="72"/>
        <end position="92"/>
    </location>
</feature>
<feature type="transmembrane region" description="Helical" evidence="1">
    <location>
        <begin position="101"/>
        <end position="118"/>
    </location>
</feature>
<name>YL171_YEAST</name>
<gene>
    <name type="ordered locus">YLR171W</name>
</gene>
<organism>
    <name type="scientific">Saccharomyces cerevisiae (strain ATCC 204508 / S288c)</name>
    <name type="common">Baker's yeast</name>
    <dbReference type="NCBI Taxonomy" id="559292"/>
    <lineage>
        <taxon>Eukaryota</taxon>
        <taxon>Fungi</taxon>
        <taxon>Dikarya</taxon>
        <taxon>Ascomycota</taxon>
        <taxon>Saccharomycotina</taxon>
        <taxon>Saccharomycetes</taxon>
        <taxon>Saccharomycetales</taxon>
        <taxon>Saccharomycetaceae</taxon>
        <taxon>Saccharomyces</taxon>
    </lineage>
</organism>
<protein>
    <recommendedName>
        <fullName>Putative uncharacterized protein YLR171W</fullName>
    </recommendedName>
</protein>
<reference key="1">
    <citation type="journal article" date="1997" name="Nature">
        <title>The nucleotide sequence of Saccharomyces cerevisiae chromosome XII.</title>
        <authorList>
            <person name="Johnston M."/>
            <person name="Hillier L.W."/>
            <person name="Riles L."/>
            <person name="Albermann K."/>
            <person name="Andre B."/>
            <person name="Ansorge W."/>
            <person name="Benes V."/>
            <person name="Brueckner M."/>
            <person name="Delius H."/>
            <person name="Dubois E."/>
            <person name="Duesterhoeft A."/>
            <person name="Entian K.-D."/>
            <person name="Floeth M."/>
            <person name="Goffeau A."/>
            <person name="Hebling U."/>
            <person name="Heumann K."/>
            <person name="Heuss-Neitzel D."/>
            <person name="Hilbert H."/>
            <person name="Hilger F."/>
            <person name="Kleine K."/>
            <person name="Koetter P."/>
            <person name="Louis E.J."/>
            <person name="Messenguy F."/>
            <person name="Mewes H.-W."/>
            <person name="Miosga T."/>
            <person name="Moestl D."/>
            <person name="Mueller-Auer S."/>
            <person name="Nentwich U."/>
            <person name="Obermaier B."/>
            <person name="Piravandi E."/>
            <person name="Pohl T.M."/>
            <person name="Portetelle D."/>
            <person name="Purnelle B."/>
            <person name="Rechmann S."/>
            <person name="Rieger M."/>
            <person name="Rinke M."/>
            <person name="Rose M."/>
            <person name="Scharfe M."/>
            <person name="Scherens B."/>
            <person name="Scholler P."/>
            <person name="Schwager C."/>
            <person name="Schwarz S."/>
            <person name="Underwood A.P."/>
            <person name="Urrestarazu L.A."/>
            <person name="Vandenbol M."/>
            <person name="Verhasselt P."/>
            <person name="Vierendeels F."/>
            <person name="Voet M."/>
            <person name="Volckaert G."/>
            <person name="Voss H."/>
            <person name="Wambutt R."/>
            <person name="Wedler E."/>
            <person name="Wedler H."/>
            <person name="Zimmermann F.K."/>
            <person name="Zollner A."/>
            <person name="Hani J."/>
            <person name="Hoheisel J.D."/>
        </authorList>
    </citation>
    <scope>NUCLEOTIDE SEQUENCE [LARGE SCALE GENOMIC DNA]</scope>
    <source>
        <strain>ATCC 204508 / S288c</strain>
    </source>
</reference>
<reference key="2">
    <citation type="journal article" date="2014" name="G3 (Bethesda)">
        <title>The reference genome sequence of Saccharomyces cerevisiae: Then and now.</title>
        <authorList>
            <person name="Engel S.R."/>
            <person name="Dietrich F.S."/>
            <person name="Fisk D.G."/>
            <person name="Binkley G."/>
            <person name="Balakrishnan R."/>
            <person name="Costanzo M.C."/>
            <person name="Dwight S.S."/>
            <person name="Hitz B.C."/>
            <person name="Karra K."/>
            <person name="Nash R.S."/>
            <person name="Weng S."/>
            <person name="Wong E.D."/>
            <person name="Lloyd P."/>
            <person name="Skrzypek M.S."/>
            <person name="Miyasato S.R."/>
            <person name="Simison M."/>
            <person name="Cherry J.M."/>
        </authorList>
    </citation>
    <scope>GENOME REANNOTATION</scope>
    <source>
        <strain>ATCC 204508 / S288c</strain>
    </source>
</reference>
<keyword id="KW-0472">Membrane</keyword>
<keyword id="KW-0812">Transmembrane</keyword>
<keyword id="KW-1133">Transmembrane helix</keyword>
<dbReference type="EMBL" id="U17246">
    <property type="protein sequence ID" value="AAB67478.1"/>
    <property type="molecule type" value="Genomic_DNA"/>
</dbReference>
<dbReference type="PIR" id="S69292">
    <property type="entry name" value="S69292"/>
</dbReference>
<dbReference type="DIP" id="DIP-3798N"/>
<dbReference type="IntAct" id="O13562">
    <property type="interactions" value="1"/>
</dbReference>
<dbReference type="MINT" id="O13562"/>
<dbReference type="PaxDb" id="4932-YLR171W"/>
<dbReference type="EnsemblFungi" id="YLR171W_mRNA">
    <property type="protein sequence ID" value="YLR171W"/>
    <property type="gene ID" value="YLR171W"/>
</dbReference>
<dbReference type="AGR" id="SGD:S000004161"/>
<dbReference type="SGD" id="S000004161">
    <property type="gene designation" value="YLR171W"/>
</dbReference>
<dbReference type="HOGENOM" id="CLU_1950504_0_0_1"/>
<dbReference type="GO" id="GO:0016020">
    <property type="term" value="C:membrane"/>
    <property type="evidence" value="ECO:0007669"/>
    <property type="project" value="UniProtKB-SubCell"/>
</dbReference>
<sequence>MSSSQTLPKYVSIVSTNRWIISKVSSSLSTSGVIPTIKYRLAYRLYTTLWSLYSMMLHILGFLANIVGVKSFTIFAFSPADIAVYHFFNLIFPCLETSNKYFNCVILCTCVSVYNLLQDRSCSWLKLLL</sequence>
<comment type="subcellular location">
    <subcellularLocation>
        <location evidence="2">Membrane</location>
        <topology evidence="2">Multi-pass membrane protein</topology>
    </subcellularLocation>
</comment>
<comment type="miscellaneous">
    <text evidence="2">Almost completely overlaps APS1.</text>
</comment>
<comment type="caution">
    <text evidence="3">Product of a dubious gene prediction unlikely to encode a functional protein. Because of that it is not part of the S.cerevisiae S288c complete/reference proteome set.</text>
</comment>
<proteinExistence type="uncertain"/>
<evidence type="ECO:0000255" key="1"/>
<evidence type="ECO:0000305" key="2"/>
<evidence type="ECO:0000305" key="3">
    <source>
    </source>
</evidence>